<keyword id="KW-0210">Decarboxylase</keyword>
<keyword id="KW-0456">Lyase</keyword>
<keyword id="KW-0460">Magnesium</keyword>
<keyword id="KW-0479">Metal-binding</keyword>
<keyword id="KW-0620">Polyamine biosynthesis</keyword>
<keyword id="KW-0663">Pyridoxal phosphate</keyword>
<keyword id="KW-1185">Reference proteome</keyword>
<keyword id="KW-0745">Spermidine biosynthesis</keyword>
<protein>
    <recommendedName>
        <fullName evidence="1">Biosynthetic arginine decarboxylase</fullName>
        <shortName evidence="1">ADC</shortName>
        <ecNumber evidence="1">4.1.1.19</ecNumber>
    </recommendedName>
</protein>
<dbReference type="EC" id="4.1.1.19" evidence="1"/>
<dbReference type="EMBL" id="CP000462">
    <property type="protein sequence ID" value="ABK38605.1"/>
    <property type="molecule type" value="Genomic_DNA"/>
</dbReference>
<dbReference type="RefSeq" id="WP_011705508.1">
    <property type="nucleotide sequence ID" value="NC_008570.1"/>
</dbReference>
<dbReference type="RefSeq" id="YP_856149.1">
    <property type="nucleotide sequence ID" value="NC_008570.1"/>
</dbReference>
<dbReference type="SMR" id="A0KIP8"/>
<dbReference type="STRING" id="380703.AHA_1613"/>
<dbReference type="EnsemblBacteria" id="ABK38605">
    <property type="protein sequence ID" value="ABK38605"/>
    <property type="gene ID" value="AHA_1613"/>
</dbReference>
<dbReference type="GeneID" id="4489158"/>
<dbReference type="KEGG" id="aha:AHA_1613"/>
<dbReference type="PATRIC" id="fig|380703.7.peg.1626"/>
<dbReference type="eggNOG" id="COG1166">
    <property type="taxonomic scope" value="Bacteria"/>
</dbReference>
<dbReference type="HOGENOM" id="CLU_027243_1_0_6"/>
<dbReference type="OrthoDB" id="9802658at2"/>
<dbReference type="UniPathway" id="UPA00186">
    <property type="reaction ID" value="UER00284"/>
</dbReference>
<dbReference type="Proteomes" id="UP000000756">
    <property type="component" value="Chromosome"/>
</dbReference>
<dbReference type="GO" id="GO:0008792">
    <property type="term" value="F:arginine decarboxylase activity"/>
    <property type="evidence" value="ECO:0007669"/>
    <property type="project" value="UniProtKB-UniRule"/>
</dbReference>
<dbReference type="GO" id="GO:0046872">
    <property type="term" value="F:metal ion binding"/>
    <property type="evidence" value="ECO:0007669"/>
    <property type="project" value="UniProtKB-KW"/>
</dbReference>
<dbReference type="GO" id="GO:0006527">
    <property type="term" value="P:arginine catabolic process"/>
    <property type="evidence" value="ECO:0007669"/>
    <property type="project" value="InterPro"/>
</dbReference>
<dbReference type="GO" id="GO:0033388">
    <property type="term" value="P:putrescine biosynthetic process from arginine"/>
    <property type="evidence" value="ECO:0007669"/>
    <property type="project" value="TreeGrafter"/>
</dbReference>
<dbReference type="GO" id="GO:0008295">
    <property type="term" value="P:spermidine biosynthetic process"/>
    <property type="evidence" value="ECO:0007669"/>
    <property type="project" value="UniProtKB-UniRule"/>
</dbReference>
<dbReference type="CDD" id="cd06830">
    <property type="entry name" value="PLPDE_III_ADC"/>
    <property type="match status" value="1"/>
</dbReference>
<dbReference type="FunFam" id="3.20.20.10:FF:000001">
    <property type="entry name" value="Biosynthetic arginine decarboxylase"/>
    <property type="match status" value="1"/>
</dbReference>
<dbReference type="Gene3D" id="1.10.287.3440">
    <property type="match status" value="1"/>
</dbReference>
<dbReference type="Gene3D" id="1.20.58.930">
    <property type="match status" value="1"/>
</dbReference>
<dbReference type="Gene3D" id="3.20.20.10">
    <property type="entry name" value="Alanine racemase"/>
    <property type="match status" value="1"/>
</dbReference>
<dbReference type="Gene3D" id="2.40.37.10">
    <property type="entry name" value="Lyase, Ornithine Decarboxylase, Chain A, domain 1"/>
    <property type="match status" value="1"/>
</dbReference>
<dbReference type="HAMAP" id="MF_01417">
    <property type="entry name" value="SpeA"/>
    <property type="match status" value="1"/>
</dbReference>
<dbReference type="InterPro" id="IPR009006">
    <property type="entry name" value="Ala_racemase/Decarboxylase_C"/>
</dbReference>
<dbReference type="InterPro" id="IPR040634">
    <property type="entry name" value="Arg_decarb_HB"/>
</dbReference>
<dbReference type="InterPro" id="IPR041128">
    <property type="entry name" value="Arg_decarbox_C"/>
</dbReference>
<dbReference type="InterPro" id="IPR002985">
    <property type="entry name" value="Arg_decrbxlase"/>
</dbReference>
<dbReference type="InterPro" id="IPR022657">
    <property type="entry name" value="De-COase2_CS"/>
</dbReference>
<dbReference type="InterPro" id="IPR022644">
    <property type="entry name" value="De-COase2_N"/>
</dbReference>
<dbReference type="InterPro" id="IPR000183">
    <property type="entry name" value="Orn/DAP/Arg_de-COase"/>
</dbReference>
<dbReference type="InterPro" id="IPR029066">
    <property type="entry name" value="PLP-binding_barrel"/>
</dbReference>
<dbReference type="NCBIfam" id="NF003763">
    <property type="entry name" value="PRK05354.1"/>
    <property type="match status" value="1"/>
</dbReference>
<dbReference type="NCBIfam" id="TIGR01273">
    <property type="entry name" value="speA"/>
    <property type="match status" value="1"/>
</dbReference>
<dbReference type="PANTHER" id="PTHR43295">
    <property type="entry name" value="ARGININE DECARBOXYLASE"/>
    <property type="match status" value="1"/>
</dbReference>
<dbReference type="PANTHER" id="PTHR43295:SF9">
    <property type="entry name" value="BIOSYNTHETIC ARGININE DECARBOXYLASE"/>
    <property type="match status" value="1"/>
</dbReference>
<dbReference type="Pfam" id="PF17810">
    <property type="entry name" value="Arg_decarb_HB"/>
    <property type="match status" value="1"/>
</dbReference>
<dbReference type="Pfam" id="PF17944">
    <property type="entry name" value="Arg_decarbox_C"/>
    <property type="match status" value="1"/>
</dbReference>
<dbReference type="Pfam" id="PF02784">
    <property type="entry name" value="Orn_Arg_deC_N"/>
    <property type="match status" value="1"/>
</dbReference>
<dbReference type="PIRSF" id="PIRSF001336">
    <property type="entry name" value="Arg_decrbxlase"/>
    <property type="match status" value="1"/>
</dbReference>
<dbReference type="PRINTS" id="PR01180">
    <property type="entry name" value="ARGDCRBXLASE"/>
</dbReference>
<dbReference type="PRINTS" id="PR01179">
    <property type="entry name" value="ODADCRBXLASE"/>
</dbReference>
<dbReference type="SUPFAM" id="SSF51419">
    <property type="entry name" value="PLP-binding barrel"/>
    <property type="match status" value="1"/>
</dbReference>
<dbReference type="PROSITE" id="PS00879">
    <property type="entry name" value="ODR_DC_2_2"/>
    <property type="match status" value="1"/>
</dbReference>
<gene>
    <name evidence="1" type="primary">speA</name>
    <name type="ordered locus">AHA_1613</name>
</gene>
<organism>
    <name type="scientific">Aeromonas hydrophila subsp. hydrophila (strain ATCC 7966 / DSM 30187 / BCRC 13018 / CCUG 14551 / JCM 1027 / KCTC 2358 / NCIMB 9240 / NCTC 8049)</name>
    <dbReference type="NCBI Taxonomy" id="380703"/>
    <lineage>
        <taxon>Bacteria</taxon>
        <taxon>Pseudomonadati</taxon>
        <taxon>Pseudomonadota</taxon>
        <taxon>Gammaproteobacteria</taxon>
        <taxon>Aeromonadales</taxon>
        <taxon>Aeromonadaceae</taxon>
        <taxon>Aeromonas</taxon>
    </lineage>
</organism>
<evidence type="ECO:0000255" key="1">
    <source>
        <dbReference type="HAMAP-Rule" id="MF_01417"/>
    </source>
</evidence>
<feature type="chain" id="PRO_1000024251" description="Biosynthetic arginine decarboxylase">
    <location>
        <begin position="1"/>
        <end position="633"/>
    </location>
</feature>
<feature type="binding site" evidence="1">
    <location>
        <begin position="284"/>
        <end position="294"/>
    </location>
    <ligand>
        <name>substrate</name>
    </ligand>
</feature>
<feature type="modified residue" description="N6-(pyridoxal phosphate)lysine" evidence="1">
    <location>
        <position position="101"/>
    </location>
</feature>
<accession>A0KIP8</accession>
<name>SPEA_AERHH</name>
<proteinExistence type="inferred from homology"/>
<comment type="function">
    <text evidence="1">Catalyzes the biosynthesis of agmatine from arginine.</text>
</comment>
<comment type="catalytic activity">
    <reaction evidence="1">
        <text>L-arginine + H(+) = agmatine + CO2</text>
        <dbReference type="Rhea" id="RHEA:17641"/>
        <dbReference type="ChEBI" id="CHEBI:15378"/>
        <dbReference type="ChEBI" id="CHEBI:16526"/>
        <dbReference type="ChEBI" id="CHEBI:32682"/>
        <dbReference type="ChEBI" id="CHEBI:58145"/>
        <dbReference type="EC" id="4.1.1.19"/>
    </reaction>
</comment>
<comment type="cofactor">
    <cofactor evidence="1">
        <name>Mg(2+)</name>
        <dbReference type="ChEBI" id="CHEBI:18420"/>
    </cofactor>
</comment>
<comment type="cofactor">
    <cofactor evidence="1">
        <name>pyridoxal 5'-phosphate</name>
        <dbReference type="ChEBI" id="CHEBI:597326"/>
    </cofactor>
</comment>
<comment type="pathway">
    <text evidence="1">Amine and polyamine biosynthesis; agmatine biosynthesis; agmatine from L-arginine: step 1/1.</text>
</comment>
<comment type="similarity">
    <text evidence="1">Belongs to the Orn/Lys/Arg decarboxylase class-II family. SpeA subfamily.</text>
</comment>
<sequence length="633" mass="70227">MTNWSSKDSLKVYNVPYWGAGFFNINDAGHVTVAPDKSRPDAQIVLSDAIEQLRQSGLTTPVLLRFPDILKSRVDALFNAFGQAIEKSGYEGDYLCVYPIKVNQQRRVIETISQSYSDKPRLGLEAGSKPELLAVLSHHHEQGSVIVCNGYKDREYIRHALLGNLMGHKVYIVVEKPSELEMVLDESARLNIKPNIGVRAKLASTGSGMWESSGGSMSKFGLSASQILALIERLRGLGKLDCLQLLHFHLGSQIANIRDIQGGIRECGRFYAELRRLGANIEVVDVGGGLGVDYEGTRSQSHCSANYSLSEYANNVVWGIGDVCREFDLPHPTIISESGRALTAHHAVLVTNIIGAEGVEMNDISAPDDDAPTILQNMWKGWLDLRSEDPSLLEIFHDSVADLGDVNTQYTMGLLNLEQRAWAEMLHQNTCLALKELLNPVNRNHRALADELSEKLADKCFANFSLFQSLPDAWGIGQVFPVMPLAGLERPLTRRGILMDITCDSDGQVEHYVDGLGVESTLPMPVYGEHEECHVGFFLVGAYQEILGDLHNLFGDTHCAEVWLDDEGKMDIRNVVRGDTVDQLLRYVNIDPSVIRENYQRIVSHPALDDATRKALLDELELGLQGYAYLEDE</sequence>
<reference key="1">
    <citation type="journal article" date="2006" name="J. Bacteriol.">
        <title>Genome sequence of Aeromonas hydrophila ATCC 7966T: jack of all trades.</title>
        <authorList>
            <person name="Seshadri R."/>
            <person name="Joseph S.W."/>
            <person name="Chopra A.K."/>
            <person name="Sha J."/>
            <person name="Shaw J."/>
            <person name="Graf J."/>
            <person name="Haft D.H."/>
            <person name="Wu M."/>
            <person name="Ren Q."/>
            <person name="Rosovitz M.J."/>
            <person name="Madupu R."/>
            <person name="Tallon L."/>
            <person name="Kim M."/>
            <person name="Jin S."/>
            <person name="Vuong H."/>
            <person name="Stine O.C."/>
            <person name="Ali A."/>
            <person name="Horneman A.J."/>
            <person name="Heidelberg J.F."/>
        </authorList>
    </citation>
    <scope>NUCLEOTIDE SEQUENCE [LARGE SCALE GENOMIC DNA]</scope>
    <source>
        <strain>ATCC 7966 / DSM 30187 / BCRC 13018 / CCUG 14551 / JCM 1027 / KCTC 2358 / NCIMB 9240 / NCTC 8049</strain>
    </source>
</reference>